<gene>
    <name evidence="1" type="primary">lipB</name>
    <name type="ordered locus">cauri_1716</name>
</gene>
<protein>
    <recommendedName>
        <fullName evidence="1">Octanoyltransferase</fullName>
        <ecNumber evidence="1">2.3.1.181</ecNumber>
    </recommendedName>
    <alternativeName>
        <fullName evidence="1">Lipoate-protein ligase B</fullName>
    </alternativeName>
    <alternativeName>
        <fullName evidence="1">Lipoyl/octanoyl transferase</fullName>
    </alternativeName>
    <alternativeName>
        <fullName evidence="1">Octanoyl-[acyl-carrier-protein]-protein N-octanoyltransferase</fullName>
    </alternativeName>
</protein>
<evidence type="ECO:0000255" key="1">
    <source>
        <dbReference type="HAMAP-Rule" id="MF_00013"/>
    </source>
</evidence>
<evidence type="ECO:0000255" key="2">
    <source>
        <dbReference type="PROSITE-ProRule" id="PRU01067"/>
    </source>
</evidence>
<sequence length="268" mass="29135">MTAPREPFFPVDRSIRASDEPLEIRRLGRMGYQEAWDLQAEIAAARAAGTQGDVILVVEHPNVYTAGKRTQPEDMPDNGLPVIDVDRGGRITWHGEGQLVVYPIIKLAEPVDVVDYVRRLEEAIIQAVRELGVSTAGRIDGRSGVWVPSTTQAADPAAPKRDRKLGALGIRVTRGVTMHGLALNCTNTLEYYEHIVACGIDDADVSTLSLELGREVTMEEAEAPLLDALLKALSGELTVADHTFASAPDPIKVANEKARQARKAAQEK</sequence>
<keyword id="KW-0012">Acyltransferase</keyword>
<keyword id="KW-0963">Cytoplasm</keyword>
<keyword id="KW-1185">Reference proteome</keyword>
<keyword id="KW-0808">Transferase</keyword>
<feature type="chain" id="PRO_1000116542" description="Octanoyltransferase">
    <location>
        <begin position="1"/>
        <end position="268"/>
    </location>
</feature>
<feature type="domain" description="BPL/LPL catalytic" evidence="2">
    <location>
        <begin position="49"/>
        <end position="237"/>
    </location>
</feature>
<feature type="active site" description="Acyl-thioester intermediate" evidence="1">
    <location>
        <position position="198"/>
    </location>
</feature>
<feature type="binding site" evidence="1">
    <location>
        <begin position="87"/>
        <end position="94"/>
    </location>
    <ligand>
        <name>substrate</name>
    </ligand>
</feature>
<feature type="binding site" evidence="1">
    <location>
        <begin position="167"/>
        <end position="169"/>
    </location>
    <ligand>
        <name>substrate</name>
    </ligand>
</feature>
<feature type="binding site" evidence="1">
    <location>
        <begin position="180"/>
        <end position="182"/>
    </location>
    <ligand>
        <name>substrate</name>
    </ligand>
</feature>
<feature type="site" description="Lowers pKa of active site Cys" evidence="1">
    <location>
        <position position="164"/>
    </location>
</feature>
<reference key="1">
    <citation type="journal article" date="2010" name="BMC Genomics">
        <title>Complete genome sequence and lifestyle of black-pigmented Corynebacterium aurimucosum ATCC 700975 (formerly C. nigricans CN-1) isolated from a vaginal swab of a woman with spontaneous abortion.</title>
        <authorList>
            <person name="Trost E."/>
            <person name="Gotker S."/>
            <person name="Schneider J."/>
            <person name="Schneiker-Bekel S."/>
            <person name="Szczepanowski R."/>
            <person name="Tilker A."/>
            <person name="Viehoever P."/>
            <person name="Arnold W."/>
            <person name="Bekel T."/>
            <person name="Blom J."/>
            <person name="Gartemann K.H."/>
            <person name="Linke B."/>
            <person name="Goesmann A."/>
            <person name="Puhler A."/>
            <person name="Shukla S.K."/>
            <person name="Tauch A."/>
        </authorList>
    </citation>
    <scope>NUCLEOTIDE SEQUENCE [LARGE SCALE GENOMIC DNA]</scope>
    <source>
        <strain>ATCC 700975 / DSM 44827 / CIP 107346 / CN-1</strain>
    </source>
</reference>
<proteinExistence type="inferred from homology"/>
<name>LIPB_CORA7</name>
<comment type="function">
    <text evidence="1">Catalyzes the transfer of endogenously produced octanoic acid from octanoyl-acyl-carrier-protein onto the lipoyl domains of lipoate-dependent enzymes. Lipoyl-ACP can also act as a substrate although octanoyl-ACP is likely to be the physiological substrate.</text>
</comment>
<comment type="catalytic activity">
    <reaction evidence="1">
        <text>octanoyl-[ACP] + L-lysyl-[protein] = N(6)-octanoyl-L-lysyl-[protein] + holo-[ACP] + H(+)</text>
        <dbReference type="Rhea" id="RHEA:17665"/>
        <dbReference type="Rhea" id="RHEA-COMP:9636"/>
        <dbReference type="Rhea" id="RHEA-COMP:9685"/>
        <dbReference type="Rhea" id="RHEA-COMP:9752"/>
        <dbReference type="Rhea" id="RHEA-COMP:9928"/>
        <dbReference type="ChEBI" id="CHEBI:15378"/>
        <dbReference type="ChEBI" id="CHEBI:29969"/>
        <dbReference type="ChEBI" id="CHEBI:64479"/>
        <dbReference type="ChEBI" id="CHEBI:78463"/>
        <dbReference type="ChEBI" id="CHEBI:78809"/>
        <dbReference type="EC" id="2.3.1.181"/>
    </reaction>
</comment>
<comment type="pathway">
    <text evidence="1">Protein modification; protein lipoylation via endogenous pathway; protein N(6)-(lipoyl)lysine from octanoyl-[acyl-carrier-protein]: step 1/2.</text>
</comment>
<comment type="subcellular location">
    <subcellularLocation>
        <location evidence="1">Cytoplasm</location>
    </subcellularLocation>
</comment>
<comment type="miscellaneous">
    <text evidence="1">In the reaction, the free carboxyl group of octanoic acid is attached via an amide linkage to the epsilon-amino group of a specific lysine residue of lipoyl domains of lipoate-dependent enzymes.</text>
</comment>
<comment type="similarity">
    <text evidence="1">Belongs to the LipB family.</text>
</comment>
<accession>C3PHK5</accession>
<dbReference type="EC" id="2.3.1.181" evidence="1"/>
<dbReference type="EMBL" id="CP001601">
    <property type="protein sequence ID" value="ACP33309.1"/>
    <property type="molecule type" value="Genomic_DNA"/>
</dbReference>
<dbReference type="RefSeq" id="WP_010190599.1">
    <property type="nucleotide sequence ID" value="NC_012590.1"/>
</dbReference>
<dbReference type="SMR" id="C3PHK5"/>
<dbReference type="STRING" id="548476.cauri_1716"/>
<dbReference type="GeneID" id="31924344"/>
<dbReference type="KEGG" id="car:cauri_1716"/>
<dbReference type="eggNOG" id="COG0321">
    <property type="taxonomic scope" value="Bacteria"/>
</dbReference>
<dbReference type="HOGENOM" id="CLU_035168_2_1_11"/>
<dbReference type="OrthoDB" id="9787061at2"/>
<dbReference type="UniPathway" id="UPA00538">
    <property type="reaction ID" value="UER00592"/>
</dbReference>
<dbReference type="Proteomes" id="UP000002077">
    <property type="component" value="Chromosome"/>
</dbReference>
<dbReference type="GO" id="GO:0005737">
    <property type="term" value="C:cytoplasm"/>
    <property type="evidence" value="ECO:0007669"/>
    <property type="project" value="UniProtKB-SubCell"/>
</dbReference>
<dbReference type="GO" id="GO:0033819">
    <property type="term" value="F:lipoyl(octanoyl) transferase activity"/>
    <property type="evidence" value="ECO:0007669"/>
    <property type="project" value="UniProtKB-EC"/>
</dbReference>
<dbReference type="GO" id="GO:0036211">
    <property type="term" value="P:protein modification process"/>
    <property type="evidence" value="ECO:0007669"/>
    <property type="project" value="InterPro"/>
</dbReference>
<dbReference type="CDD" id="cd16444">
    <property type="entry name" value="LipB"/>
    <property type="match status" value="1"/>
</dbReference>
<dbReference type="Gene3D" id="3.30.930.10">
    <property type="entry name" value="Bira Bifunctional Protein, Domain 2"/>
    <property type="match status" value="1"/>
</dbReference>
<dbReference type="HAMAP" id="MF_00013">
    <property type="entry name" value="LipB"/>
    <property type="match status" value="1"/>
</dbReference>
<dbReference type="InterPro" id="IPR045864">
    <property type="entry name" value="aa-tRNA-synth_II/BPL/LPL"/>
</dbReference>
<dbReference type="InterPro" id="IPR004143">
    <property type="entry name" value="BPL_LPL_catalytic"/>
</dbReference>
<dbReference type="InterPro" id="IPR000544">
    <property type="entry name" value="Octanoyltransferase"/>
</dbReference>
<dbReference type="InterPro" id="IPR020605">
    <property type="entry name" value="Octanoyltransferase_CS"/>
</dbReference>
<dbReference type="NCBIfam" id="TIGR00214">
    <property type="entry name" value="lipB"/>
    <property type="match status" value="1"/>
</dbReference>
<dbReference type="NCBIfam" id="NF010925">
    <property type="entry name" value="PRK14345.1"/>
    <property type="match status" value="1"/>
</dbReference>
<dbReference type="PANTHER" id="PTHR10993:SF7">
    <property type="entry name" value="LIPOYLTRANSFERASE 2, MITOCHONDRIAL-RELATED"/>
    <property type="match status" value="1"/>
</dbReference>
<dbReference type="PANTHER" id="PTHR10993">
    <property type="entry name" value="OCTANOYLTRANSFERASE"/>
    <property type="match status" value="1"/>
</dbReference>
<dbReference type="Pfam" id="PF21948">
    <property type="entry name" value="LplA-B_cat"/>
    <property type="match status" value="1"/>
</dbReference>
<dbReference type="SUPFAM" id="SSF55681">
    <property type="entry name" value="Class II aaRS and biotin synthetases"/>
    <property type="match status" value="1"/>
</dbReference>
<dbReference type="PROSITE" id="PS51733">
    <property type="entry name" value="BPL_LPL_CATALYTIC"/>
    <property type="match status" value="1"/>
</dbReference>
<dbReference type="PROSITE" id="PS01313">
    <property type="entry name" value="LIPB"/>
    <property type="match status" value="1"/>
</dbReference>
<organism>
    <name type="scientific">Corynebacterium aurimucosum (strain ATCC 700975 / DSM 44827 / CIP 107346 / CN-1)</name>
    <name type="common">Corynebacterium nigricans</name>
    <dbReference type="NCBI Taxonomy" id="548476"/>
    <lineage>
        <taxon>Bacteria</taxon>
        <taxon>Bacillati</taxon>
        <taxon>Actinomycetota</taxon>
        <taxon>Actinomycetes</taxon>
        <taxon>Mycobacteriales</taxon>
        <taxon>Corynebacteriaceae</taxon>
        <taxon>Corynebacterium</taxon>
    </lineage>
</organism>